<gene>
    <name evidence="8" type="primary">CYP505</name>
</gene>
<sequence length="1066" mass="117926">MAESVPIPEPPGYPLIGNLGEFTSNPLSDLNRLADTYGPIFRLRLGAKAPIFVSSNSLINEVCDEKRFKKTLKSVLSQVREGVHDGLFTAFEDEPNWGKAHRILVPAFGPLSIRGMFPEMHDIATQLCMKFARHGPRTPIDTSDNFTRLALDTLALCAMDFRFYSYYKEELHPFIEAMGDFLTESGNRNRRPPFAPNFLYRAANEKFYGDIALMKSVADEVVAARKASPSDRKDLLAAMLNGVDPQTGEKLSDENITNQLITFLIAGHETTSGTLSFAMYQLLKNPEAYSKVQKEVDEVVGRGPVLVEHLTKLPYISAVLRETLRLNSPITAFGLEAIDDTFLGGKYLVKKGEIVTALLSRGHVDPVVYGNDADKFIPERMLDDEFARLNKEYPNCWKPFGNGKRACIGRPFAWQESLLAMVVLFQNFNFTMTDPNYALEIKQTLTIKPDHFYINATLRHGMTPTELEHVLAGNGATSSSTHNIKAAANLDAKAGSGKPMAIFYGSNSGTCEALANRLASDAPSHGFSATTVGPLDQAKQNLPEDRPVVIVTASYEGQPPSNAAHFIKWMEDLDGNDMEKVSYAVFACGHHDWVETFHRIPKLVDSTLEKRGGTRLVPMGSADAATSDMFSDFEAWEDIVLWPGLKEKYKISDEESGGQKGLLVEVSTPRKTSLRQDVEEALVVAEKTLTKSGPAKKHIEIQLPSAMTYKAGDYLAILPLNPKSTVARVFRRFSLAWDSFLKIQSEGPTTLPTNVAISAFDVFSAYVELSQPATKRNILALAEATEDKDTIQELERLAGDAYQAEISPKRVSVLDLLEKFPAVALPISSYLAMLPPMRVRQYSISSSPFADPSKLTLTYSLLDAPSLSGQGRHVGVATNFLSHLTAGDKLHVSVRASSEAFHLPSDAEKTPIICVAAGTGLAPLRGFIQERAAMLAAGRTLAPALLFFGCRNPEIDDLYAEEFERWEKMGAVDVRRAYSRATDKSEGCKYVQDRVYHDRADVFKVWDQGAKVFICGSREIGKAVEDVCVRLAIEKAQQNGRDVTEEMARAWFERSRNERFATDVFD</sequence>
<dbReference type="EC" id="1.14.14.1" evidence="6 7"/>
<dbReference type="EC" id="1.6.2.4" evidence="6 7"/>
<dbReference type="EMBL" id="AB030037">
    <property type="protein sequence ID" value="BAA82526.1"/>
    <property type="molecule type" value="Genomic_DNA"/>
</dbReference>
<dbReference type="SMR" id="Q9Y8G7"/>
<dbReference type="VEuPathDB" id="FungiDB:FOC1_g10006735"/>
<dbReference type="VEuPathDB" id="FungiDB:FOC4_g10006868"/>
<dbReference type="VEuPathDB" id="FungiDB:FOIG_06751"/>
<dbReference type="VEuPathDB" id="FungiDB:FOMG_03037"/>
<dbReference type="VEuPathDB" id="FungiDB:FOXG_04152"/>
<dbReference type="VEuPathDB" id="FungiDB:FOZG_02961"/>
<dbReference type="VEuPathDB" id="FungiDB:HZS61_014270"/>
<dbReference type="BRENDA" id="1.11.2.4">
    <property type="organism ID" value="2351"/>
</dbReference>
<dbReference type="GO" id="GO:0005829">
    <property type="term" value="C:cytosol"/>
    <property type="evidence" value="ECO:0007669"/>
    <property type="project" value="TreeGrafter"/>
</dbReference>
<dbReference type="GO" id="GO:0016020">
    <property type="term" value="C:membrane"/>
    <property type="evidence" value="ECO:0007669"/>
    <property type="project" value="UniProtKB-SubCell"/>
</dbReference>
<dbReference type="GO" id="GO:0070330">
    <property type="term" value="F:aromatase activity"/>
    <property type="evidence" value="ECO:0007669"/>
    <property type="project" value="InterPro"/>
</dbReference>
<dbReference type="GO" id="GO:0050660">
    <property type="term" value="F:flavin adenine dinucleotide binding"/>
    <property type="evidence" value="ECO:0007669"/>
    <property type="project" value="TreeGrafter"/>
</dbReference>
<dbReference type="GO" id="GO:0010181">
    <property type="term" value="F:FMN binding"/>
    <property type="evidence" value="ECO:0007669"/>
    <property type="project" value="InterPro"/>
</dbReference>
<dbReference type="GO" id="GO:0020037">
    <property type="term" value="F:heme binding"/>
    <property type="evidence" value="ECO:0007669"/>
    <property type="project" value="InterPro"/>
</dbReference>
<dbReference type="GO" id="GO:0005506">
    <property type="term" value="F:iron ion binding"/>
    <property type="evidence" value="ECO:0000250"/>
    <property type="project" value="UniProtKB"/>
</dbReference>
<dbReference type="GO" id="GO:0003958">
    <property type="term" value="F:NADPH-hemoprotein reductase activity"/>
    <property type="evidence" value="ECO:0007669"/>
    <property type="project" value="UniProtKB-EC"/>
</dbReference>
<dbReference type="CDD" id="cd06206">
    <property type="entry name" value="bifunctional_CYPOR"/>
    <property type="match status" value="1"/>
</dbReference>
<dbReference type="CDD" id="cd11068">
    <property type="entry name" value="CYP120A1"/>
    <property type="match status" value="1"/>
</dbReference>
<dbReference type="FunFam" id="1.10.630.10:FF:000040">
    <property type="entry name" value="Bifunctional cytochrome P450/NADPH--P450 reductase"/>
    <property type="match status" value="1"/>
</dbReference>
<dbReference type="FunFam" id="1.20.990.10:FF:000011">
    <property type="entry name" value="Bifunctional cytochrome P450/NADPH--P450 reductase"/>
    <property type="match status" value="1"/>
</dbReference>
<dbReference type="FunFam" id="2.40.30.10:FF:000198">
    <property type="entry name" value="Bifunctional cytochrome P450/NADPH--P450 reductase"/>
    <property type="match status" value="1"/>
</dbReference>
<dbReference type="FunFam" id="3.40.50.360:FF:000032">
    <property type="entry name" value="Bifunctional cytochrome P450/NADPH--P450 reductase"/>
    <property type="match status" value="1"/>
</dbReference>
<dbReference type="FunFam" id="3.40.50.80:FF:000031">
    <property type="entry name" value="Bifunctional cytochrome P450/NADPH--P450 reductase"/>
    <property type="match status" value="1"/>
</dbReference>
<dbReference type="Gene3D" id="3.40.50.360">
    <property type="match status" value="1"/>
</dbReference>
<dbReference type="Gene3D" id="1.10.630.10">
    <property type="entry name" value="Cytochrome P450"/>
    <property type="match status" value="1"/>
</dbReference>
<dbReference type="Gene3D" id="1.20.990.10">
    <property type="entry name" value="NADPH-cytochrome p450 Reductase, Chain A, domain 3"/>
    <property type="match status" value="1"/>
</dbReference>
<dbReference type="Gene3D" id="3.40.50.80">
    <property type="entry name" value="Nucleotide-binding domain of ferredoxin-NADP reductase (FNR) module"/>
    <property type="match status" value="1"/>
</dbReference>
<dbReference type="Gene3D" id="2.40.30.10">
    <property type="entry name" value="Translation factors"/>
    <property type="match status" value="1"/>
</dbReference>
<dbReference type="InterPro" id="IPR023206">
    <property type="entry name" value="Bifunctional_P450_P450_red"/>
</dbReference>
<dbReference type="InterPro" id="IPR003097">
    <property type="entry name" value="CysJ-like_FAD-binding"/>
</dbReference>
<dbReference type="InterPro" id="IPR001128">
    <property type="entry name" value="Cyt_P450"/>
</dbReference>
<dbReference type="InterPro" id="IPR017972">
    <property type="entry name" value="Cyt_P450_CS"/>
</dbReference>
<dbReference type="InterPro" id="IPR002401">
    <property type="entry name" value="Cyt_P450_E_grp-I"/>
</dbReference>
<dbReference type="InterPro" id="IPR036396">
    <property type="entry name" value="Cyt_P450_sf"/>
</dbReference>
<dbReference type="InterPro" id="IPR017927">
    <property type="entry name" value="FAD-bd_FR_type"/>
</dbReference>
<dbReference type="InterPro" id="IPR008254">
    <property type="entry name" value="Flavodoxin/NO_synth"/>
</dbReference>
<dbReference type="InterPro" id="IPR029039">
    <property type="entry name" value="Flavoprotein-like_sf"/>
</dbReference>
<dbReference type="InterPro" id="IPR039261">
    <property type="entry name" value="FNR_nucleotide-bd"/>
</dbReference>
<dbReference type="InterPro" id="IPR023173">
    <property type="entry name" value="NADPH_Cyt_P450_Rdtase_alpha"/>
</dbReference>
<dbReference type="InterPro" id="IPR001433">
    <property type="entry name" value="OxRdtase_FAD/NAD-bd"/>
</dbReference>
<dbReference type="InterPro" id="IPR017938">
    <property type="entry name" value="Riboflavin_synthase-like_b-brl"/>
</dbReference>
<dbReference type="PANTHER" id="PTHR19384:SF127">
    <property type="entry name" value="BIFUNCTIONAL CYTOCHROME P450_NADPH--P450 REDUCTASE"/>
    <property type="match status" value="1"/>
</dbReference>
<dbReference type="PANTHER" id="PTHR19384">
    <property type="entry name" value="NITRIC OXIDE SYNTHASE-RELATED"/>
    <property type="match status" value="1"/>
</dbReference>
<dbReference type="Pfam" id="PF00667">
    <property type="entry name" value="FAD_binding_1"/>
    <property type="match status" value="1"/>
</dbReference>
<dbReference type="Pfam" id="PF00258">
    <property type="entry name" value="Flavodoxin_1"/>
    <property type="match status" value="1"/>
</dbReference>
<dbReference type="Pfam" id="PF00175">
    <property type="entry name" value="NAD_binding_1"/>
    <property type="match status" value="1"/>
</dbReference>
<dbReference type="Pfam" id="PF00067">
    <property type="entry name" value="p450"/>
    <property type="match status" value="1"/>
</dbReference>
<dbReference type="PIRSF" id="PIRSF000209">
    <property type="entry name" value="Bifunctional_P450_P450R"/>
    <property type="match status" value="1"/>
</dbReference>
<dbReference type="PRINTS" id="PR00463">
    <property type="entry name" value="EP450I"/>
</dbReference>
<dbReference type="PRINTS" id="PR00385">
    <property type="entry name" value="P450"/>
</dbReference>
<dbReference type="SUPFAM" id="SSF48264">
    <property type="entry name" value="Cytochrome P450"/>
    <property type="match status" value="1"/>
</dbReference>
<dbReference type="SUPFAM" id="SSF52343">
    <property type="entry name" value="Ferredoxin reductase-like, C-terminal NADP-linked domain"/>
    <property type="match status" value="1"/>
</dbReference>
<dbReference type="SUPFAM" id="SSF52218">
    <property type="entry name" value="Flavoproteins"/>
    <property type="match status" value="1"/>
</dbReference>
<dbReference type="SUPFAM" id="SSF63380">
    <property type="entry name" value="Riboflavin synthase domain-like"/>
    <property type="match status" value="1"/>
</dbReference>
<dbReference type="PROSITE" id="PS00086">
    <property type="entry name" value="CYTOCHROME_P450"/>
    <property type="match status" value="1"/>
</dbReference>
<dbReference type="PROSITE" id="PS51384">
    <property type="entry name" value="FAD_FR"/>
    <property type="match status" value="1"/>
</dbReference>
<dbReference type="PROSITE" id="PS50902">
    <property type="entry name" value="FLAVODOXIN_LIKE"/>
    <property type="match status" value="1"/>
</dbReference>
<comment type="function">
    <text evidence="6 7">Functions as a fatty acid monooxygenase (PubMed:11985584, PubMed:8830036). Catalyzes hydroxylation of fatty acids at omega-1, omega-2 and omega-3 positions (PubMed:11985584). Shows activity toward fatty acids with a chain length of 9-18 carbons with optimum chain lengths of 12-14 carbons (lauric, tridecylic and myristic acids) (PubMed:11985584, PubMed:8830036). Can also use shorter saturated fatty acids with a chain length of 9 or 10 carbons as substrates (PubMed:11985584). Also displays a NADPH-dependent reductase activity in the C-terminal domain, which allows electron transfer from NADPH to the heme iron of the cytochrome P450 N-terminal domain (PubMed:11985584, PubMed:8830036).</text>
</comment>
<comment type="catalytic activity">
    <reaction evidence="6 7">
        <text>an organic molecule + reduced [NADPH--hemoprotein reductase] + O2 = an alcohol + oxidized [NADPH--hemoprotein reductase] + H2O + H(+)</text>
        <dbReference type="Rhea" id="RHEA:17149"/>
        <dbReference type="Rhea" id="RHEA-COMP:11964"/>
        <dbReference type="Rhea" id="RHEA-COMP:11965"/>
        <dbReference type="ChEBI" id="CHEBI:15377"/>
        <dbReference type="ChEBI" id="CHEBI:15378"/>
        <dbReference type="ChEBI" id="CHEBI:15379"/>
        <dbReference type="ChEBI" id="CHEBI:30879"/>
        <dbReference type="ChEBI" id="CHEBI:57618"/>
        <dbReference type="ChEBI" id="CHEBI:58210"/>
        <dbReference type="ChEBI" id="CHEBI:142491"/>
        <dbReference type="EC" id="1.14.14.1"/>
    </reaction>
</comment>
<comment type="catalytic activity">
    <reaction evidence="6 7">
        <text>2 oxidized [cytochrome P450] + NADPH = 2 reduced [cytochrome P450] + NADP(+) + H(+)</text>
        <dbReference type="Rhea" id="RHEA:24040"/>
        <dbReference type="Rhea" id="RHEA-COMP:14627"/>
        <dbReference type="Rhea" id="RHEA-COMP:14628"/>
        <dbReference type="ChEBI" id="CHEBI:15378"/>
        <dbReference type="ChEBI" id="CHEBI:55376"/>
        <dbReference type="ChEBI" id="CHEBI:57783"/>
        <dbReference type="ChEBI" id="CHEBI:58349"/>
        <dbReference type="ChEBI" id="CHEBI:60344"/>
        <dbReference type="EC" id="1.6.2.4"/>
    </reaction>
</comment>
<comment type="cofactor">
    <cofactor evidence="6">
        <name>FAD</name>
        <dbReference type="ChEBI" id="CHEBI:57692"/>
    </cofactor>
    <text evidence="1">Binds 1 FAD.</text>
</comment>
<comment type="cofactor">
    <cofactor evidence="6">
        <name>FMN</name>
        <dbReference type="ChEBI" id="CHEBI:58210"/>
    </cofactor>
    <text evidence="1">Binds 1 FMN.</text>
</comment>
<comment type="cofactor">
    <cofactor evidence="6">
        <name>heme</name>
        <dbReference type="ChEBI" id="CHEBI:30413"/>
    </cofactor>
</comment>
<comment type="activity regulation">
    <text evidence="6">Stimulated NADPH--cytochrome reductase activity in the presence of substrate. Inhibited by fatty acid substrates longer than 13 carbons and the degree of inhibition increases with increasing chain length.</text>
</comment>
<comment type="biophysicochemical properties">
    <kinetics>
        <KM evidence="7">0.16 mM for NADH</KM>
        <KM evidence="7">0.15 mM for laurate</KM>
        <KM evidence="6">3200 uM for nonanoic acid</KM>
        <KM evidence="6">260 uM for decanoic acid</KM>
        <KM evidence="6">160 uM for undecanoic acid</KM>
        <KM evidence="6">30 uM for laurate/dodecanoic acid</KM>
        <KM evidence="6">36 uM for tridecanoic acid</KM>
        <KM evidence="6">19 uM for tetradecanoic acid</KM>
        <KM evidence="6">8 uM for pentadecanoic acid</KM>
        <KM evidence="6">10 uM for hexadecanoic acid</KM>
        <KM evidence="6">74 uM for NADH</KM>
    </kinetics>
    <phDependence>
        <text evidence="7">Optimum pH is 6.5.</text>
    </phDependence>
</comment>
<comment type="subcellular location">
    <subcellularLocation>
        <location evidence="5 7">Membrane</location>
        <topology evidence="5 7">Peripheral membrane protein</topology>
    </subcellularLocation>
</comment>
<comment type="similarity">
    <text evidence="9">In the N-terminal section; belongs to the cytochrome P450 family.</text>
</comment>
<accession>Q9Y8G7</accession>
<feature type="chain" id="PRO_0000052210" description="Bifunctional cytochrome P450/NADPH--P450 reductase">
    <location>
        <begin position="1"/>
        <end position="1066"/>
    </location>
</feature>
<feature type="domain" description="Flavodoxin-like" evidence="3">
    <location>
        <begin position="500"/>
        <end position="641"/>
    </location>
</feature>
<feature type="domain" description="FAD-binding FR-type" evidence="4">
    <location>
        <begin position="676"/>
        <end position="904"/>
    </location>
</feature>
<feature type="region of interest" description="Cytochrome P450">
    <location>
        <begin position="1"/>
        <end position="480"/>
    </location>
</feature>
<feature type="region of interest" description="NADPH-P-450 reductase">
    <location>
        <begin position="481"/>
        <end position="1066"/>
    </location>
</feature>
<feature type="binding site" description="axial binding residue" evidence="2">
    <location>
        <position position="407"/>
    </location>
    <ligand>
        <name>heme</name>
        <dbReference type="ChEBI" id="CHEBI:30413"/>
    </ligand>
    <ligandPart>
        <name>Fe</name>
        <dbReference type="ChEBI" id="CHEBI:18248"/>
    </ligandPart>
</feature>
<feature type="binding site" evidence="2">
    <location>
        <begin position="506"/>
        <end position="511"/>
    </location>
    <ligand>
        <name>FMN</name>
        <dbReference type="ChEBI" id="CHEBI:58210"/>
    </ligand>
</feature>
<feature type="binding site" evidence="2">
    <location>
        <begin position="554"/>
        <end position="557"/>
    </location>
    <ligand>
        <name>FMN</name>
        <dbReference type="ChEBI" id="CHEBI:58210"/>
    </ligand>
</feature>
<feature type="binding site" evidence="2">
    <location>
        <position position="588"/>
    </location>
    <ligand>
        <name>FMN</name>
        <dbReference type="ChEBI" id="CHEBI:58210"/>
    </ligand>
</feature>
<feature type="binding site" evidence="2">
    <location>
        <position position="596"/>
    </location>
    <ligand>
        <name>FMN</name>
        <dbReference type="ChEBI" id="CHEBI:58210"/>
    </ligand>
</feature>
<feature type="site" description="Important for catalytic activity" evidence="2">
    <location>
        <position position="270"/>
    </location>
</feature>
<keyword id="KW-0903">Direct protein sequencing</keyword>
<keyword id="KW-0249">Electron transport</keyword>
<keyword id="KW-0274">FAD</keyword>
<keyword id="KW-0285">Flavoprotein</keyword>
<keyword id="KW-0288">FMN</keyword>
<keyword id="KW-0349">Heme</keyword>
<keyword id="KW-0408">Iron</keyword>
<keyword id="KW-0472">Membrane</keyword>
<keyword id="KW-0479">Metal-binding</keyword>
<keyword id="KW-0503">Monooxygenase</keyword>
<keyword id="KW-0511">Multifunctional enzyme</keyword>
<keyword id="KW-0521">NADP</keyword>
<keyword id="KW-0560">Oxidoreductase</keyword>
<keyword id="KW-0813">Transport</keyword>
<proteinExistence type="evidence at protein level"/>
<organism>
    <name type="scientific">Fusarium oxysporum</name>
    <name type="common">Fusarium vascular wilt</name>
    <dbReference type="NCBI Taxonomy" id="5507"/>
    <lineage>
        <taxon>Eukaryota</taxon>
        <taxon>Fungi</taxon>
        <taxon>Dikarya</taxon>
        <taxon>Ascomycota</taxon>
        <taxon>Pezizomycotina</taxon>
        <taxon>Sordariomycetes</taxon>
        <taxon>Hypocreomycetidae</taxon>
        <taxon>Hypocreales</taxon>
        <taxon>Nectriaceae</taxon>
        <taxon>Fusarium</taxon>
        <taxon>Fusarium oxysporum species complex</taxon>
    </lineage>
</organism>
<evidence type="ECO:0000250" key="1"/>
<evidence type="ECO:0000250" key="2">
    <source>
        <dbReference type="UniProtKB" id="P14779"/>
    </source>
</evidence>
<evidence type="ECO:0000255" key="3">
    <source>
        <dbReference type="PROSITE-ProRule" id="PRU00088"/>
    </source>
</evidence>
<evidence type="ECO:0000255" key="4">
    <source>
        <dbReference type="PROSITE-ProRule" id="PRU00716"/>
    </source>
</evidence>
<evidence type="ECO:0000269" key="5">
    <source>
    </source>
</evidence>
<evidence type="ECO:0000269" key="6">
    <source>
    </source>
</evidence>
<evidence type="ECO:0000269" key="7">
    <source>
    </source>
</evidence>
<evidence type="ECO:0000303" key="8">
    <source>
    </source>
</evidence>
<evidence type="ECO:0000305" key="9"/>
<name>C505_FUSOX</name>
<protein>
    <recommendedName>
        <fullName evidence="9">Bifunctional cytochrome P450/NADPH--P450 reductase</fullName>
    </recommendedName>
    <alternativeName>
        <fullName evidence="8">Cytochrome P450foxy</fullName>
    </alternativeName>
    <alternativeName>
        <fullName>Fatty acid omega-hydroxylase</fullName>
    </alternativeName>
    <alternativeName>
        <fullName evidence="8">P450foxy</fullName>
    </alternativeName>
    <domain>
        <recommendedName>
            <fullName>Cytochrome P450 505</fullName>
            <ecNumber evidence="6 7">1.14.14.1</ecNumber>
        </recommendedName>
    </domain>
    <domain>
        <recommendedName>
            <fullName>NADPH--cytochrome P450 reductase</fullName>
            <ecNumber evidence="6 7">1.6.2.4</ecNumber>
        </recommendedName>
    </domain>
</protein>
<reference key="1">
    <citation type="journal article" date="2000" name="J. Biol. Chem.">
        <title>Fusarium oxysporum fatty-acid subterminal hydroxylase (CYP505) is a membrane-bound eukaryotic counterpart of Bacillus megaterium cytochrome P450BM3.</title>
        <authorList>
            <person name="Kitazume T."/>
            <person name="Takaya N."/>
            <person name="Nakayama N."/>
            <person name="Shoun H."/>
        </authorList>
    </citation>
    <scope>NUCLEOTIDE SEQUENCE [GENOMIC DNA]</scope>
    <scope>PROTEIN SEQUENCE OF 82-99; 353-359; 362-380; 518-538; 616-626 AND 1005-1009</scope>
    <scope>SUBCELLULAR LOCATION</scope>
    <source>
        <strain>MT-811</strain>
    </source>
</reference>
<reference key="2">
    <citation type="journal article" date="1996" name="J. Biochem.">
        <title>Cytochrome P450foxy, a catalytically self-sufficient fatty acid hydroxylase of the fungus Fusarium oxysporum.</title>
        <authorList>
            <person name="Nakayama N."/>
            <person name="Takemae A."/>
            <person name="Shoun H."/>
        </authorList>
    </citation>
    <scope>FUNCTION</scope>
    <scope>SUBCELLULAR LOCATION</scope>
    <scope>CATALYTIC ACTIVITY</scope>
    <scope>SUBSTRATE SPECIFICITY</scope>
    <scope>BIOPHYSICOCHEMICAL PROPERTIES</scope>
    <source>
        <strain>MT-811</strain>
    </source>
</reference>
<reference key="3">
    <citation type="journal article" date="2002" name="Eur. J. Biochem.">
        <title>Kinetic analysis of hydroxylation of saturated fatty acids by recombinant P450foxy produced by an Escherichia coli expression system.</title>
        <authorList>
            <person name="Kitazume T."/>
            <person name="Tanaka A."/>
            <person name="Takaya N."/>
            <person name="Nakamura A."/>
            <person name="Matsuyama S."/>
            <person name="Suzuki T."/>
            <person name="Shoun H."/>
        </authorList>
    </citation>
    <scope>FUNCTION</scope>
    <scope>CATALYTIC ACTIVITY</scope>
    <scope>COFACTOR</scope>
    <scope>ACTIVITY REGULATION</scope>
    <scope>BIOPHYSICOCHEMICAL PROPERTIES</scope>
    <scope>SUBSTRATE SPECIFICITY</scope>
</reference>